<reference key="1">
    <citation type="journal article" date="2009" name="Proc. Natl. Acad. Sci. U.S.A.">
        <title>Biogeography of the Sulfolobus islandicus pan-genome.</title>
        <authorList>
            <person name="Reno M.L."/>
            <person name="Held N.L."/>
            <person name="Fields C.J."/>
            <person name="Burke P.V."/>
            <person name="Whitaker R.J."/>
        </authorList>
    </citation>
    <scope>NUCLEOTIDE SEQUENCE [LARGE SCALE GENOMIC DNA]</scope>
    <source>
        <strain>Y.G.57.14 / Yellowstone #1</strain>
    </source>
</reference>
<keyword id="KW-0173">Coenzyme A biosynthesis</keyword>
<keyword id="KW-0342">GTP-binding</keyword>
<keyword id="KW-0418">Kinase</keyword>
<keyword id="KW-0547">Nucleotide-binding</keyword>
<keyword id="KW-0808">Transferase</keyword>
<gene>
    <name type="ordered locus">YG5714_1804</name>
</gene>
<accession>C3N767</accession>
<comment type="function">
    <text evidence="1">Catalyzes the GTP-dependent phosphorylation of the 3'-hydroxyl group of dephosphocoenzyme A to form coenzyme A (CoA).</text>
</comment>
<comment type="catalytic activity">
    <reaction evidence="1">
        <text>3'-dephospho-CoA + GTP = GDP + CoA + H(+)</text>
        <dbReference type="Rhea" id="RHEA:61156"/>
        <dbReference type="ChEBI" id="CHEBI:15378"/>
        <dbReference type="ChEBI" id="CHEBI:37565"/>
        <dbReference type="ChEBI" id="CHEBI:57287"/>
        <dbReference type="ChEBI" id="CHEBI:57328"/>
        <dbReference type="ChEBI" id="CHEBI:58189"/>
        <dbReference type="EC" id="2.7.1.237"/>
    </reaction>
</comment>
<comment type="pathway">
    <text evidence="1">Cofactor biosynthesis; coenzyme A biosynthesis.</text>
</comment>
<comment type="similarity">
    <text evidence="1">Belongs to the GTP-dependent DPCK family.</text>
</comment>
<protein>
    <recommendedName>
        <fullName evidence="1">GTP-dependent dephospho-CoA kinase</fullName>
        <ecNumber evidence="1">2.7.1.237</ecNumber>
    </recommendedName>
    <alternativeName>
        <fullName evidence="1">Dephospho-coenzyme A kinase</fullName>
        <shortName evidence="1">DPCK</shortName>
    </alternativeName>
</protein>
<evidence type="ECO:0000255" key="1">
    <source>
        <dbReference type="HAMAP-Rule" id="MF_00590"/>
    </source>
</evidence>
<sequence length="178" mass="20296">MEIRDNNKVNLCFAFDNLRKELSRPYGILFTNNKLFLDFVSKSIQQGFKVITVGDYVSRVLEENGIIPFLEVIDGKTKRSIPQRTIVKNKEYKVTNEAGKIRFEIFEIMENILKDRDGGVVFVNGEEDLLVIPVTLSADNGDIVIYGQPNAGAVVIIVNEMIRWRVRDILEKAVVKEC</sequence>
<organism>
    <name type="scientific">Saccharolobus islandicus (strain Y.G.57.14 / Yellowstone #1)</name>
    <name type="common">Sulfolobus islandicus</name>
    <dbReference type="NCBI Taxonomy" id="439386"/>
    <lineage>
        <taxon>Archaea</taxon>
        <taxon>Thermoproteota</taxon>
        <taxon>Thermoprotei</taxon>
        <taxon>Sulfolobales</taxon>
        <taxon>Sulfolobaceae</taxon>
        <taxon>Saccharolobus</taxon>
    </lineage>
</organism>
<proteinExistence type="inferred from homology"/>
<feature type="chain" id="PRO_1000212169" description="GTP-dependent dephospho-CoA kinase">
    <location>
        <begin position="1"/>
        <end position="178"/>
    </location>
</feature>
<feature type="binding site" evidence="1">
    <location>
        <position position="55"/>
    </location>
    <ligand>
        <name>GTP</name>
        <dbReference type="ChEBI" id="CHEBI:37565"/>
    </ligand>
</feature>
<feature type="binding site" evidence="1">
    <location>
        <position position="57"/>
    </location>
    <ligand>
        <name>GTP</name>
        <dbReference type="ChEBI" id="CHEBI:37565"/>
    </ligand>
</feature>
<feature type="binding site" evidence="1">
    <location>
        <position position="74"/>
    </location>
    <ligand>
        <name>GTP</name>
        <dbReference type="ChEBI" id="CHEBI:37565"/>
    </ligand>
</feature>
<feature type="binding site" evidence="1">
    <location>
        <position position="76"/>
    </location>
    <ligand>
        <name>GTP</name>
        <dbReference type="ChEBI" id="CHEBI:37565"/>
    </ligand>
</feature>
<feature type="binding site" evidence="1">
    <location>
        <position position="127"/>
    </location>
    <ligand>
        <name>GTP</name>
        <dbReference type="ChEBI" id="CHEBI:37565"/>
    </ligand>
</feature>
<dbReference type="EC" id="2.7.1.237" evidence="1"/>
<dbReference type="EMBL" id="CP001403">
    <property type="protein sequence ID" value="ACP46061.1"/>
    <property type="molecule type" value="Genomic_DNA"/>
</dbReference>
<dbReference type="RefSeq" id="WP_012716360.1">
    <property type="nucleotide sequence ID" value="NC_012622.1"/>
</dbReference>
<dbReference type="SMR" id="C3N767"/>
<dbReference type="GeneID" id="7807412"/>
<dbReference type="KEGG" id="siy:YG5714_1804"/>
<dbReference type="HOGENOM" id="CLU_120795_1_0_2"/>
<dbReference type="UniPathway" id="UPA00241"/>
<dbReference type="Proteomes" id="UP000002308">
    <property type="component" value="Chromosome"/>
</dbReference>
<dbReference type="GO" id="GO:0005525">
    <property type="term" value="F:GTP binding"/>
    <property type="evidence" value="ECO:0007669"/>
    <property type="project" value="UniProtKB-UniRule"/>
</dbReference>
<dbReference type="GO" id="GO:0016301">
    <property type="term" value="F:kinase activity"/>
    <property type="evidence" value="ECO:0007669"/>
    <property type="project" value="UniProtKB-UniRule"/>
</dbReference>
<dbReference type="GO" id="GO:0015937">
    <property type="term" value="P:coenzyme A biosynthetic process"/>
    <property type="evidence" value="ECO:0007669"/>
    <property type="project" value="UniProtKB-UniRule"/>
</dbReference>
<dbReference type="HAMAP" id="MF_00590">
    <property type="entry name" value="Dephospho_CoA_kinase_GTP_dep"/>
    <property type="match status" value="1"/>
</dbReference>
<dbReference type="InterPro" id="IPR007164">
    <property type="entry name" value="GTP-dep_dephospho-CoA_kin"/>
</dbReference>
<dbReference type="PANTHER" id="PTHR40732:SF1">
    <property type="entry name" value="GTP-DEPENDENT DEPHOSPHO-COA KINASE"/>
    <property type="match status" value="1"/>
</dbReference>
<dbReference type="PANTHER" id="PTHR40732">
    <property type="entry name" value="UPF0218 PROTEIN TK1697"/>
    <property type="match status" value="1"/>
</dbReference>
<dbReference type="Pfam" id="PF04019">
    <property type="entry name" value="DUF359"/>
    <property type="match status" value="1"/>
</dbReference>
<dbReference type="PIRSF" id="PIRSF006533">
    <property type="entry name" value="UCP006533"/>
    <property type="match status" value="1"/>
</dbReference>
<name>DPCKG_SACI7</name>